<reference key="1">
    <citation type="journal article" date="2009" name="BMC Genomics">
        <title>Metabolic analysis of the soil microbe Dechloromonas aromatica str. RCB: indications of a surprisingly complex life-style and cryptic anaerobic pathways for aromatic degradation.</title>
        <authorList>
            <person name="Salinero K.K."/>
            <person name="Keller K."/>
            <person name="Feil W.S."/>
            <person name="Feil H."/>
            <person name="Trong S."/>
            <person name="Di Bartolo G."/>
            <person name="Lapidus A."/>
        </authorList>
    </citation>
    <scope>NUCLEOTIDE SEQUENCE [LARGE SCALE GENOMIC DNA]</scope>
    <source>
        <strain>RCB</strain>
    </source>
</reference>
<sequence>MDIKHYMHTVGRQARAASRRLAGATTAEKNAALLAIAAAIRRESAALVAANQEDLTAARAAGLETAMLDRLTLSAKGVESMAEGVEQVATLADPIGEMTDIKYRPSGIQVGKMRVPLGVIGIIYEARPNVTADAAALCLKSGNAAILRGGSEAIRSNRAIAALVHEGLKAAGLPAESVQVIDTTDRAAVGELITMREFVDVIVPRGGKGLIARLLAESRVPMIQHLDGNCHVYLEAEADPAKALKIVENAKTQRYGTCNTAESLLVDRSVAAMLLPPIAAMLTAKGVEIRGCAETQAIVPNAIAATEEDYYTEYLAPIISVKVVSGIDEAIEHINQYSSHHSEAIITDNHPKAMRFLREVDSASVMINASTRFADGFEYGLGAEIGISTDKIHARGPVGLEGLTSQKWVVLGDGHVRG</sequence>
<keyword id="KW-0028">Amino-acid biosynthesis</keyword>
<keyword id="KW-0963">Cytoplasm</keyword>
<keyword id="KW-0521">NADP</keyword>
<keyword id="KW-0560">Oxidoreductase</keyword>
<keyword id="KW-0641">Proline biosynthesis</keyword>
<organism>
    <name type="scientific">Dechloromonas aromatica (strain RCB)</name>
    <dbReference type="NCBI Taxonomy" id="159087"/>
    <lineage>
        <taxon>Bacteria</taxon>
        <taxon>Pseudomonadati</taxon>
        <taxon>Pseudomonadota</taxon>
        <taxon>Betaproteobacteria</taxon>
        <taxon>Rhodocyclales</taxon>
        <taxon>Azonexaceae</taxon>
        <taxon>Dechloromonas</taxon>
    </lineage>
</organism>
<comment type="function">
    <text evidence="1">Catalyzes the NADPH-dependent reduction of L-glutamate 5-phosphate into L-glutamate 5-semialdehyde and phosphate. The product spontaneously undergoes cyclization to form 1-pyrroline-5-carboxylate.</text>
</comment>
<comment type="catalytic activity">
    <reaction evidence="1">
        <text>L-glutamate 5-semialdehyde + phosphate + NADP(+) = L-glutamyl 5-phosphate + NADPH + H(+)</text>
        <dbReference type="Rhea" id="RHEA:19541"/>
        <dbReference type="ChEBI" id="CHEBI:15378"/>
        <dbReference type="ChEBI" id="CHEBI:43474"/>
        <dbReference type="ChEBI" id="CHEBI:57783"/>
        <dbReference type="ChEBI" id="CHEBI:58066"/>
        <dbReference type="ChEBI" id="CHEBI:58274"/>
        <dbReference type="ChEBI" id="CHEBI:58349"/>
        <dbReference type="EC" id="1.2.1.41"/>
    </reaction>
</comment>
<comment type="pathway">
    <text evidence="1">Amino-acid biosynthesis; L-proline biosynthesis; L-glutamate 5-semialdehyde from L-glutamate: step 2/2.</text>
</comment>
<comment type="subcellular location">
    <subcellularLocation>
        <location evidence="1">Cytoplasm</location>
    </subcellularLocation>
</comment>
<comment type="similarity">
    <text evidence="1">Belongs to the gamma-glutamyl phosphate reductase family.</text>
</comment>
<evidence type="ECO:0000255" key="1">
    <source>
        <dbReference type="HAMAP-Rule" id="MF_00412"/>
    </source>
</evidence>
<gene>
    <name evidence="1" type="primary">proA</name>
    <name type="ordered locus">Daro_0540</name>
</gene>
<dbReference type="EC" id="1.2.1.41" evidence="1"/>
<dbReference type="EMBL" id="CP000089">
    <property type="protein sequence ID" value="AAZ45297.1"/>
    <property type="molecule type" value="Genomic_DNA"/>
</dbReference>
<dbReference type="SMR" id="Q47IN4"/>
<dbReference type="STRING" id="159087.Daro_0540"/>
<dbReference type="KEGG" id="dar:Daro_0540"/>
<dbReference type="eggNOG" id="COG0014">
    <property type="taxonomic scope" value="Bacteria"/>
</dbReference>
<dbReference type="HOGENOM" id="CLU_030231_0_0_4"/>
<dbReference type="OrthoDB" id="9809970at2"/>
<dbReference type="UniPathway" id="UPA00098">
    <property type="reaction ID" value="UER00360"/>
</dbReference>
<dbReference type="GO" id="GO:0005737">
    <property type="term" value="C:cytoplasm"/>
    <property type="evidence" value="ECO:0007669"/>
    <property type="project" value="UniProtKB-SubCell"/>
</dbReference>
<dbReference type="GO" id="GO:0004350">
    <property type="term" value="F:glutamate-5-semialdehyde dehydrogenase activity"/>
    <property type="evidence" value="ECO:0007669"/>
    <property type="project" value="UniProtKB-UniRule"/>
</dbReference>
<dbReference type="GO" id="GO:0050661">
    <property type="term" value="F:NADP binding"/>
    <property type="evidence" value="ECO:0007669"/>
    <property type="project" value="InterPro"/>
</dbReference>
<dbReference type="GO" id="GO:0055129">
    <property type="term" value="P:L-proline biosynthetic process"/>
    <property type="evidence" value="ECO:0007669"/>
    <property type="project" value="UniProtKB-UniRule"/>
</dbReference>
<dbReference type="CDD" id="cd07079">
    <property type="entry name" value="ALDH_F18-19_ProA-GPR"/>
    <property type="match status" value="1"/>
</dbReference>
<dbReference type="FunFam" id="3.40.309.10:FF:000006">
    <property type="entry name" value="Gamma-glutamyl phosphate reductase"/>
    <property type="match status" value="1"/>
</dbReference>
<dbReference type="Gene3D" id="3.40.605.10">
    <property type="entry name" value="Aldehyde Dehydrogenase, Chain A, domain 1"/>
    <property type="match status" value="1"/>
</dbReference>
<dbReference type="Gene3D" id="3.40.309.10">
    <property type="entry name" value="Aldehyde Dehydrogenase, Chain A, domain 2"/>
    <property type="match status" value="1"/>
</dbReference>
<dbReference type="HAMAP" id="MF_00412">
    <property type="entry name" value="ProA"/>
    <property type="match status" value="1"/>
</dbReference>
<dbReference type="InterPro" id="IPR016161">
    <property type="entry name" value="Ald_DH/histidinol_DH"/>
</dbReference>
<dbReference type="InterPro" id="IPR016163">
    <property type="entry name" value="Ald_DH_C"/>
</dbReference>
<dbReference type="InterPro" id="IPR016162">
    <property type="entry name" value="Ald_DH_N"/>
</dbReference>
<dbReference type="InterPro" id="IPR015590">
    <property type="entry name" value="Aldehyde_DH_dom"/>
</dbReference>
<dbReference type="InterPro" id="IPR020593">
    <property type="entry name" value="G-glutamylP_reductase_CS"/>
</dbReference>
<dbReference type="InterPro" id="IPR012134">
    <property type="entry name" value="Glu-5-SA_DH"/>
</dbReference>
<dbReference type="InterPro" id="IPR000965">
    <property type="entry name" value="GPR_dom"/>
</dbReference>
<dbReference type="NCBIfam" id="NF001221">
    <property type="entry name" value="PRK00197.1"/>
    <property type="match status" value="1"/>
</dbReference>
<dbReference type="NCBIfam" id="TIGR00407">
    <property type="entry name" value="proA"/>
    <property type="match status" value="1"/>
</dbReference>
<dbReference type="PANTHER" id="PTHR11063:SF8">
    <property type="entry name" value="DELTA-1-PYRROLINE-5-CARBOXYLATE SYNTHASE"/>
    <property type="match status" value="1"/>
</dbReference>
<dbReference type="PANTHER" id="PTHR11063">
    <property type="entry name" value="GLUTAMATE SEMIALDEHYDE DEHYDROGENASE"/>
    <property type="match status" value="1"/>
</dbReference>
<dbReference type="Pfam" id="PF00171">
    <property type="entry name" value="Aldedh"/>
    <property type="match status" value="2"/>
</dbReference>
<dbReference type="PIRSF" id="PIRSF000151">
    <property type="entry name" value="GPR"/>
    <property type="match status" value="1"/>
</dbReference>
<dbReference type="SUPFAM" id="SSF53720">
    <property type="entry name" value="ALDH-like"/>
    <property type="match status" value="1"/>
</dbReference>
<dbReference type="PROSITE" id="PS01223">
    <property type="entry name" value="PROA"/>
    <property type="match status" value="1"/>
</dbReference>
<feature type="chain" id="PRO_0000230000" description="Gamma-glutamyl phosphate reductase">
    <location>
        <begin position="1"/>
        <end position="418"/>
    </location>
</feature>
<protein>
    <recommendedName>
        <fullName evidence="1">Gamma-glutamyl phosphate reductase</fullName>
        <shortName evidence="1">GPR</shortName>
        <ecNumber evidence="1">1.2.1.41</ecNumber>
    </recommendedName>
    <alternativeName>
        <fullName evidence="1">Glutamate-5-semialdehyde dehydrogenase</fullName>
    </alternativeName>
    <alternativeName>
        <fullName evidence="1">Glutamyl-gamma-semialdehyde dehydrogenase</fullName>
        <shortName evidence="1">GSA dehydrogenase</shortName>
    </alternativeName>
</protein>
<accession>Q47IN4</accession>
<name>PROA_DECAR</name>
<proteinExistence type="inferred from homology"/>